<dbReference type="EMBL" id="AL606684">
    <property type="protein sequence ID" value="CAE03568.2"/>
    <property type="molecule type" value="Genomic_DNA"/>
</dbReference>
<dbReference type="EMBL" id="AP008210">
    <property type="protein sequence ID" value="BAF15746.1"/>
    <property type="molecule type" value="Genomic_DNA"/>
</dbReference>
<dbReference type="EMBL" id="AP014960">
    <property type="protein sequence ID" value="BAS90948.1"/>
    <property type="molecule type" value="Genomic_DNA"/>
</dbReference>
<dbReference type="EMBL" id="AK100672">
    <property type="status" value="NOT_ANNOTATED_CDS"/>
    <property type="molecule type" value="mRNA"/>
</dbReference>
<dbReference type="EMBL" id="AJ427984">
    <property type="protein sequence ID" value="CAD21005.1"/>
    <property type="status" value="ALT_SEQ"/>
    <property type="molecule type" value="Genomic_DNA"/>
</dbReference>
<dbReference type="RefSeq" id="XP_015636386.1">
    <property type="nucleotide sequence ID" value="XM_015780900.1"/>
</dbReference>
<dbReference type="FunCoup" id="Q7XPL3">
    <property type="interactions" value="26"/>
</dbReference>
<dbReference type="STRING" id="39947.Q7XPL3"/>
<dbReference type="GlyCosmos" id="Q7XPL3">
    <property type="glycosylation" value="2 sites, No reported glycans"/>
</dbReference>
<dbReference type="PaxDb" id="39947-Q7XPL3"/>
<dbReference type="EnsemblPlants" id="Os04t0610700-01">
    <property type="protein sequence ID" value="Os04t0610700-01"/>
    <property type="gene ID" value="Os04g0610700"/>
</dbReference>
<dbReference type="Gramene" id="Os04t0610700-01">
    <property type="protein sequence ID" value="Os04t0610700-01"/>
    <property type="gene ID" value="Os04g0610700"/>
</dbReference>
<dbReference type="KEGG" id="dosa:Os04g0610700"/>
<dbReference type="eggNOG" id="ENOG502QPSA">
    <property type="taxonomic scope" value="Eukaryota"/>
</dbReference>
<dbReference type="HOGENOM" id="CLU_008142_2_0_1"/>
<dbReference type="InParanoid" id="Q7XPL3"/>
<dbReference type="OMA" id="KARKNSW"/>
<dbReference type="OrthoDB" id="504708at2759"/>
<dbReference type="Proteomes" id="UP000000763">
    <property type="component" value="Chromosome 4"/>
</dbReference>
<dbReference type="Proteomes" id="UP000059680">
    <property type="component" value="Chromosome 4"/>
</dbReference>
<dbReference type="ExpressionAtlas" id="Q7XPL3">
    <property type="expression patterns" value="baseline and differential"/>
</dbReference>
<dbReference type="GO" id="GO:0016020">
    <property type="term" value="C:membrane"/>
    <property type="evidence" value="ECO:0000318"/>
    <property type="project" value="GO_Central"/>
</dbReference>
<dbReference type="GO" id="GO:0015079">
    <property type="term" value="F:potassium ion transmembrane transporter activity"/>
    <property type="evidence" value="ECO:0000318"/>
    <property type="project" value="GO_Central"/>
</dbReference>
<dbReference type="GO" id="GO:0006813">
    <property type="term" value="P:potassium ion transport"/>
    <property type="evidence" value="ECO:0000318"/>
    <property type="project" value="GO_Central"/>
</dbReference>
<dbReference type="InterPro" id="IPR003855">
    <property type="entry name" value="K+_transporter"/>
</dbReference>
<dbReference type="InterPro" id="IPR053952">
    <property type="entry name" value="K_trans_C"/>
</dbReference>
<dbReference type="InterPro" id="IPR053951">
    <property type="entry name" value="K_trans_N"/>
</dbReference>
<dbReference type="NCBIfam" id="TIGR00794">
    <property type="entry name" value="kup"/>
    <property type="match status" value="1"/>
</dbReference>
<dbReference type="PANTHER" id="PTHR30540">
    <property type="entry name" value="OSMOTIC STRESS POTASSIUM TRANSPORTER"/>
    <property type="match status" value="1"/>
</dbReference>
<dbReference type="PANTHER" id="PTHR30540:SF19">
    <property type="entry name" value="POTASSIUM TRANSPORTER 15-RELATED"/>
    <property type="match status" value="1"/>
</dbReference>
<dbReference type="Pfam" id="PF02705">
    <property type="entry name" value="K_trans"/>
    <property type="match status" value="1"/>
</dbReference>
<dbReference type="Pfam" id="PF22776">
    <property type="entry name" value="K_trans_C"/>
    <property type="match status" value="1"/>
</dbReference>
<comment type="function">
    <text evidence="1">High-affinity potassium transporter.</text>
</comment>
<comment type="subcellular location">
    <subcellularLocation>
        <location evidence="4">Membrane</location>
        <topology evidence="4">Multi-pass membrane protein</topology>
    </subcellularLocation>
</comment>
<comment type="similarity">
    <text evidence="4">Belongs to the HAK/KUP transporter (TC 2.A.72.3) family.</text>
</comment>
<comment type="sequence caution" evidence="4">
    <conflict type="erroneous gene model prediction">
        <sequence resource="EMBL-CDS" id="CAD21005"/>
    </conflict>
</comment>
<feature type="chain" id="PRO_0000209102" description="Probable potassium transporter 15">
    <location>
        <begin position="1"/>
        <end position="867"/>
    </location>
</feature>
<feature type="topological domain" description="Cytoplasmic" evidence="2">
    <location>
        <begin position="1"/>
        <end position="124"/>
    </location>
</feature>
<feature type="transmembrane region" description="Helical; Name=1" evidence="2">
    <location>
        <begin position="125"/>
        <end position="145"/>
    </location>
</feature>
<feature type="topological domain" description="Extracellular" evidence="2">
    <location>
        <begin position="146"/>
        <end position="167"/>
    </location>
</feature>
<feature type="transmembrane region" description="Helical; Name=2" evidence="2">
    <location>
        <begin position="168"/>
        <end position="188"/>
    </location>
</feature>
<feature type="topological domain" description="Cytoplasmic" evidence="2">
    <location>
        <begin position="189"/>
        <end position="252"/>
    </location>
</feature>
<feature type="transmembrane region" description="Helical; Name=3" evidence="2">
    <location>
        <begin position="253"/>
        <end position="273"/>
    </location>
</feature>
<feature type="topological domain" description="Extracellular" evidence="2">
    <location>
        <begin position="274"/>
        <end position="285"/>
    </location>
</feature>
<feature type="transmembrane region" description="Helical; Name=4" evidence="2">
    <location>
        <begin position="286"/>
        <end position="306"/>
    </location>
</feature>
<feature type="topological domain" description="Cytoplasmic" evidence="2">
    <location>
        <begin position="307"/>
        <end position="317"/>
    </location>
</feature>
<feature type="transmembrane region" description="Helical; Name=5" evidence="2">
    <location>
        <begin position="318"/>
        <end position="338"/>
    </location>
</feature>
<feature type="topological domain" description="Extracellular" evidence="2">
    <location>
        <begin position="339"/>
        <end position="365"/>
    </location>
</feature>
<feature type="transmembrane region" description="Helical; Name=6" evidence="2">
    <location>
        <begin position="366"/>
        <end position="386"/>
    </location>
</feature>
<feature type="topological domain" description="Cytoplasmic" evidence="2">
    <location>
        <begin position="387"/>
        <end position="400"/>
    </location>
</feature>
<feature type="transmembrane region" description="Helical; Name=7" evidence="2">
    <location>
        <begin position="401"/>
        <end position="421"/>
    </location>
</feature>
<feature type="topological domain" description="Extracellular" evidence="2">
    <location>
        <begin position="422"/>
        <end position="433"/>
    </location>
</feature>
<feature type="transmembrane region" description="Helical; Name=8" evidence="2">
    <location>
        <begin position="434"/>
        <end position="454"/>
    </location>
</feature>
<feature type="topological domain" description="Cytoplasmic" evidence="2">
    <location>
        <begin position="455"/>
        <end position="490"/>
    </location>
</feature>
<feature type="transmembrane region" description="Helical; Name=9" evidence="2">
    <location>
        <begin position="491"/>
        <end position="511"/>
    </location>
</feature>
<feature type="topological domain" description="Extracellular" evidence="2">
    <location>
        <begin position="512"/>
        <end position="522"/>
    </location>
</feature>
<feature type="transmembrane region" description="Helical; Name=10" evidence="2">
    <location>
        <begin position="523"/>
        <end position="543"/>
    </location>
</feature>
<feature type="topological domain" description="Cytoplasmic" evidence="2">
    <location>
        <begin position="544"/>
        <end position="545"/>
    </location>
</feature>
<feature type="transmembrane region" description="Helical; Name=11" evidence="2">
    <location>
        <begin position="546"/>
        <end position="566"/>
    </location>
</feature>
<feature type="topological domain" description="Extracellular" evidence="2">
    <location>
        <begin position="567"/>
        <end position="572"/>
    </location>
</feature>
<feature type="transmembrane region" description="Helical; Name=12" evidence="2">
    <location>
        <begin position="573"/>
        <end position="593"/>
    </location>
</feature>
<feature type="topological domain" description="Cytoplasmic" evidence="2">
    <location>
        <begin position="594"/>
        <end position="867"/>
    </location>
</feature>
<feature type="region of interest" description="Disordered" evidence="3">
    <location>
        <begin position="1"/>
        <end position="88"/>
    </location>
</feature>
<feature type="compositionally biased region" description="Low complexity" evidence="3">
    <location>
        <begin position="1"/>
        <end position="13"/>
    </location>
</feature>
<feature type="compositionally biased region" description="Acidic residues" evidence="3">
    <location>
        <begin position="32"/>
        <end position="44"/>
    </location>
</feature>
<feature type="compositionally biased region" description="Low complexity" evidence="3">
    <location>
        <begin position="45"/>
        <end position="54"/>
    </location>
</feature>
<feature type="compositionally biased region" description="Acidic residues" evidence="3">
    <location>
        <begin position="63"/>
        <end position="84"/>
    </location>
</feature>
<feature type="glycosylation site" description="N-linked (GlcNAc...) asparagine" evidence="2">
    <location>
        <position position="340"/>
    </location>
</feature>
<feature type="glycosylation site" description="N-linked (GlcNAc...) asparagine" evidence="2">
    <location>
        <position position="425"/>
    </location>
</feature>
<feature type="sequence conflict" description="In Ref. 5; AK100672." evidence="4" ref="5">
    <original>I</original>
    <variation>V</variation>
    <location>
        <position position="266"/>
    </location>
</feature>
<feature type="sequence conflict" description="In Ref. 5; AK100672." evidence="4" ref="5">
    <original>Y</original>
    <variation>N</variation>
    <location>
        <position position="413"/>
    </location>
</feature>
<proteinExistence type="evidence at transcript level"/>
<evidence type="ECO:0000250" key="1"/>
<evidence type="ECO:0000255" key="2"/>
<evidence type="ECO:0000256" key="3">
    <source>
        <dbReference type="SAM" id="MobiDB-lite"/>
    </source>
</evidence>
<evidence type="ECO:0000305" key="4"/>
<gene>
    <name type="primary">HAK15</name>
    <name type="ordered locus">Os04g0610700</name>
    <name type="ordered locus">LOC_Os04g52120</name>
    <name type="ORF">OSJNBa0085I10.13</name>
</gene>
<sequence>MAASSSSSASASAMGGGGMRKAPSMEWRWVSTEEDDEGEEDGDTVEAAAAAVGAVGRGGSFGSEEEEDEEDGGGGGEGEGEGEDGEKQKLIRTVPSVDWFDVEGYEVSVAQHIEDSEEFDFGRTMFLALQTLAVVFGDIGISPLYTFDVMFSKYPILGEEDVLGALSLVLYTLISMPLVKYVLVVLWANDDGEGGIFALYSLICRNAKVSLIPNQVHSEKRMSSFRLKLPTPELERSIKVKEKLESSLLLKKLLLGLVLFGTAMFISNGVITPAMSVLSAVSGLKVGIPNASQGLVVMISVVLLVILYSVQRYATSKMGFALGPSLLIWFCCLGGIGIYNLSTYGPAAFKAFNPLYIIYYFGRNPFQAWLSLAGCLLCATGSEAIFANLSYFPVRYVQSMFALLVLPCLVLAYLGQGAFLIANQNSSEQIFFSSIPSGVFWPVFLIANLAALIASRTMTTAIFQCLKQSIALGCFPRLKIIHTSRKFMAKIYIPVVNWFLLFSCLGFILLFRSIYDVGNAYAIAELGVMIMATVYVTIIMLLIWETSIVKVLSFVITFLSLELVFFSSSLSSVGDGGWALIIFASGILMVMFIWNYGSKLKYDSEVKKKLSKDLMRKLGPNLGTIRAPGLGLVYSEIVKGVPAIFGHFLIALPAIHSIIVFVCIRNVPVPVVPQTERFLFQRVCTRGYHMFRCIARYGYKDKNQESQSTFERLLIEGLEKFIQREAVELSLQSGDDIDSDEEPPTPSRTIVAPNGSLYSLDVPLLADFVPSAEVIPEASCSTPQHDPVVDYTQNLELELAFIRQAKQSGAVYLIDNPIVKARKNSWFFKKLIINYFFAFLRNNCRRAMMSMSIPHTNVMQVRLTSYV</sequence>
<keyword id="KW-0325">Glycoprotein</keyword>
<keyword id="KW-0406">Ion transport</keyword>
<keyword id="KW-0472">Membrane</keyword>
<keyword id="KW-0630">Potassium</keyword>
<keyword id="KW-0633">Potassium transport</keyword>
<keyword id="KW-1185">Reference proteome</keyword>
<keyword id="KW-0812">Transmembrane</keyword>
<keyword id="KW-1133">Transmembrane helix</keyword>
<keyword id="KW-0813">Transport</keyword>
<reference key="1">
    <citation type="journal article" date="2002" name="Nature">
        <title>Sequence and analysis of rice chromosome 4.</title>
        <authorList>
            <person name="Feng Q."/>
            <person name="Zhang Y."/>
            <person name="Hao P."/>
            <person name="Wang S."/>
            <person name="Fu G."/>
            <person name="Huang Y."/>
            <person name="Li Y."/>
            <person name="Zhu J."/>
            <person name="Liu Y."/>
            <person name="Hu X."/>
            <person name="Jia P."/>
            <person name="Zhang Y."/>
            <person name="Zhao Q."/>
            <person name="Ying K."/>
            <person name="Yu S."/>
            <person name="Tang Y."/>
            <person name="Weng Q."/>
            <person name="Zhang L."/>
            <person name="Lu Y."/>
            <person name="Mu J."/>
            <person name="Lu Y."/>
            <person name="Zhang L.S."/>
            <person name="Yu Z."/>
            <person name="Fan D."/>
            <person name="Liu X."/>
            <person name="Lu T."/>
            <person name="Li C."/>
            <person name="Wu Y."/>
            <person name="Sun T."/>
            <person name="Lei H."/>
            <person name="Li T."/>
            <person name="Hu H."/>
            <person name="Guan J."/>
            <person name="Wu M."/>
            <person name="Zhang R."/>
            <person name="Zhou B."/>
            <person name="Chen Z."/>
            <person name="Chen L."/>
            <person name="Jin Z."/>
            <person name="Wang R."/>
            <person name="Yin H."/>
            <person name="Cai Z."/>
            <person name="Ren S."/>
            <person name="Lv G."/>
            <person name="Gu W."/>
            <person name="Zhu G."/>
            <person name="Tu Y."/>
            <person name="Jia J."/>
            <person name="Zhang Y."/>
            <person name="Chen J."/>
            <person name="Kang H."/>
            <person name="Chen X."/>
            <person name="Shao C."/>
            <person name="Sun Y."/>
            <person name="Hu Q."/>
            <person name="Zhang X."/>
            <person name="Zhang W."/>
            <person name="Wang L."/>
            <person name="Ding C."/>
            <person name="Sheng H."/>
            <person name="Gu J."/>
            <person name="Chen S."/>
            <person name="Ni L."/>
            <person name="Zhu F."/>
            <person name="Chen W."/>
            <person name="Lan L."/>
            <person name="Lai Y."/>
            <person name="Cheng Z."/>
            <person name="Gu M."/>
            <person name="Jiang J."/>
            <person name="Li J."/>
            <person name="Hong G."/>
            <person name="Xue Y."/>
            <person name="Han B."/>
        </authorList>
    </citation>
    <scope>NUCLEOTIDE SEQUENCE [LARGE SCALE GENOMIC DNA]</scope>
    <source>
        <strain>cv. Nipponbare</strain>
    </source>
</reference>
<reference key="2">
    <citation type="journal article" date="2005" name="Nature">
        <title>The map-based sequence of the rice genome.</title>
        <authorList>
            <consortium name="International rice genome sequencing project (IRGSP)"/>
        </authorList>
    </citation>
    <scope>NUCLEOTIDE SEQUENCE [LARGE SCALE GENOMIC DNA]</scope>
    <source>
        <strain>cv. Nipponbare</strain>
    </source>
</reference>
<reference key="3">
    <citation type="journal article" date="2008" name="Nucleic Acids Res.">
        <title>The rice annotation project database (RAP-DB): 2008 update.</title>
        <authorList>
            <consortium name="The rice annotation project (RAP)"/>
        </authorList>
    </citation>
    <scope>GENOME REANNOTATION</scope>
    <source>
        <strain>cv. Nipponbare</strain>
    </source>
</reference>
<reference key="4">
    <citation type="journal article" date="2013" name="Rice">
        <title>Improvement of the Oryza sativa Nipponbare reference genome using next generation sequence and optical map data.</title>
        <authorList>
            <person name="Kawahara Y."/>
            <person name="de la Bastide M."/>
            <person name="Hamilton J.P."/>
            <person name="Kanamori H."/>
            <person name="McCombie W.R."/>
            <person name="Ouyang S."/>
            <person name="Schwartz D.C."/>
            <person name="Tanaka T."/>
            <person name="Wu J."/>
            <person name="Zhou S."/>
            <person name="Childs K.L."/>
            <person name="Davidson R.M."/>
            <person name="Lin H."/>
            <person name="Quesada-Ocampo L."/>
            <person name="Vaillancourt B."/>
            <person name="Sakai H."/>
            <person name="Lee S.S."/>
            <person name="Kim J."/>
            <person name="Numa H."/>
            <person name="Itoh T."/>
            <person name="Buell C.R."/>
            <person name="Matsumoto T."/>
        </authorList>
    </citation>
    <scope>GENOME REANNOTATION</scope>
    <source>
        <strain>cv. Nipponbare</strain>
    </source>
</reference>
<reference key="5">
    <citation type="journal article" date="2003" name="Science">
        <title>Collection, mapping, and annotation of over 28,000 cDNA clones from japonica rice.</title>
        <authorList>
            <consortium name="The rice full-length cDNA consortium"/>
        </authorList>
    </citation>
    <scope>NUCLEOTIDE SEQUENCE [LARGE SCALE MRNA]</scope>
    <source>
        <strain>cv. Nipponbare</strain>
    </source>
</reference>
<reference key="6">
    <citation type="journal article" date="2002" name="Plant Physiol.">
        <title>Inventory and functional characterization of the HAK potassium transporters of rice.</title>
        <authorList>
            <person name="Banuelos M.A."/>
            <person name="Garciadeblas B."/>
            <person name="Cubero B."/>
            <person name="Rodriguez-Navarro A."/>
        </authorList>
    </citation>
    <scope>NUCLEOTIDE SEQUENCE [GENOMIC DNA] OF 118-867</scope>
    <scope>NOMENCLATURE</scope>
    <source>
        <strain>cv. Nipponbare</strain>
    </source>
</reference>
<reference key="7">
    <citation type="journal article" date="2009" name="J. Genet. Genomics">
        <title>Molecular evolution and functional divergence of HAK potassium transporter gene family in rice (Oryza sativa L.).</title>
        <authorList>
            <person name="Yang Z."/>
            <person name="Gao Q."/>
            <person name="Sun C."/>
            <person name="Li W."/>
            <person name="Gu S."/>
            <person name="Xu C."/>
        </authorList>
    </citation>
    <scope>GENE FAMILY</scope>
</reference>
<protein>
    <recommendedName>
        <fullName>Probable potassium transporter 15</fullName>
    </recommendedName>
    <alternativeName>
        <fullName>OsHAK15</fullName>
    </alternativeName>
</protein>
<organism>
    <name type="scientific">Oryza sativa subsp. japonica</name>
    <name type="common">Rice</name>
    <dbReference type="NCBI Taxonomy" id="39947"/>
    <lineage>
        <taxon>Eukaryota</taxon>
        <taxon>Viridiplantae</taxon>
        <taxon>Streptophyta</taxon>
        <taxon>Embryophyta</taxon>
        <taxon>Tracheophyta</taxon>
        <taxon>Spermatophyta</taxon>
        <taxon>Magnoliopsida</taxon>
        <taxon>Liliopsida</taxon>
        <taxon>Poales</taxon>
        <taxon>Poaceae</taxon>
        <taxon>BOP clade</taxon>
        <taxon>Oryzoideae</taxon>
        <taxon>Oryzeae</taxon>
        <taxon>Oryzinae</taxon>
        <taxon>Oryza</taxon>
        <taxon>Oryza sativa</taxon>
    </lineage>
</organism>
<name>HAK15_ORYSJ</name>
<accession>Q7XPL3</accession>
<accession>A0A0P0WEU0</accession>
<accession>Q0JA91</accession>
<accession>Q8VXA8</accession>